<keyword id="KW-1031">Host cell junction</keyword>
<keyword id="KW-0813">Transport</keyword>
<keyword id="KW-0916">Viral movement protein</keyword>
<proteinExistence type="inferred from homology"/>
<comment type="function">
    <text evidence="1">Transports viral genome to neighboring plant cells directly through plasmosdesmata, without any budding. The movement protein allows efficient cell to cell propagation, by bypassing the host cell wall barrier. Acts by forming a tubular structure at the host plasmodesmata, enlarging it enough to allow free passage of virion capsids (By similarity).</text>
</comment>
<comment type="subcellular location">
    <subcellularLocation>
        <location evidence="1">Host cell junction</location>
        <location evidence="1">Host plasmodesma</location>
    </subcellularLocation>
    <text evidence="1">Assembles into long tubular structures at the surface of the infected protoplast.</text>
</comment>
<comment type="similarity">
    <text evidence="3">Belongs to the cucumovirus movement protein family.</text>
</comment>
<feature type="chain" id="PRO_0000083243" description="Movement protein">
    <location>
        <begin position="1"/>
        <end position="279"/>
    </location>
</feature>
<feature type="region of interest" description="Disordered" evidence="2">
    <location>
        <begin position="246"/>
        <end position="279"/>
    </location>
</feature>
<feature type="compositionally biased region" description="Low complexity" evidence="2">
    <location>
        <begin position="254"/>
        <end position="268"/>
    </location>
</feature>
<name>MVP_CMVN</name>
<evidence type="ECO:0000250" key="1"/>
<evidence type="ECO:0000256" key="2">
    <source>
        <dbReference type="SAM" id="MobiDB-lite"/>
    </source>
</evidence>
<evidence type="ECO:0000305" key="3"/>
<protein>
    <recommendedName>
        <fullName>Movement protein</fullName>
        <shortName>MP</shortName>
    </recommendedName>
    <alternativeName>
        <fullName>Protein 3A</fullName>
    </alternativeName>
</protein>
<organism>
    <name type="scientific">Cucumber mosaic virus (strain N)</name>
    <name type="common">CMV</name>
    <dbReference type="NCBI Taxonomy" id="117123"/>
    <lineage>
        <taxon>Viruses</taxon>
        <taxon>Riboviria</taxon>
        <taxon>Orthornavirae</taxon>
        <taxon>Kitrinoviricota</taxon>
        <taxon>Alsuviricetes</taxon>
        <taxon>Martellivirales</taxon>
        <taxon>Bromoviridae</taxon>
        <taxon>Cucumovirus</taxon>
        <taxon>Cucumber mosaic virus</taxon>
    </lineage>
</organism>
<organismHost>
    <name type="scientific">Cucumis sativus</name>
    <name type="common">Cucumber</name>
    <dbReference type="NCBI Taxonomy" id="3659"/>
</organismHost>
<organismHost>
    <name type="scientific">Solanum lycopersicum</name>
    <name type="common">Tomato</name>
    <name type="synonym">Lycopersicon esculentum</name>
    <dbReference type="NCBI Taxonomy" id="4081"/>
</organismHost>
<organismHost>
    <name type="scientific">Spinacia oleracea</name>
    <name type="common">Spinach</name>
    <dbReference type="NCBI Taxonomy" id="3562"/>
</organismHost>
<reference key="1">
    <citation type="journal article" date="1996" name="Nihon Shokubutsu Byori Gakkaiho">
        <title>Six new subgroup I members of Japanese cucumber mosaic virus as determined by nucleotide sequence analysis on RNA3's cDNAs.</title>
        <authorList>
            <person name="Chaumpluk P."/>
            <person name="Sasaki Y."/>
            <person name="Nakajima N."/>
            <person name="Nagano H."/>
            <person name="Nakamura I."/>
            <person name="Suzuki K."/>
            <person name="Mise K."/>
            <person name="Inouye N."/>
            <person name="Okuno T."/>
            <person name="Furusawa I."/>
        </authorList>
    </citation>
    <scope>NUCLEOTIDE SEQUENCE [GENOMIC RNA]</scope>
</reference>
<sequence>MAFQGTSRTLTQQSSAATSDDLQKILFSPEAIKKMATECDLGRHHWMRADNAISVRPLVPEVTHGRIASFFKSGYDVGELCSKGYMSVPQVLCAVTRTVSTDAEGSLRIYLADLGDKELSPIDGQCVSLHNHDLPALVSFQPTYDCPMETVGNRKRCFAVVIERHGYIGYTGTTASVCSNWQARFSSKNNNYTHIAAGKTLVLPFNRLAEQTKPSAVARLLKSQLNNIESSQYVLTNAKINQNARSESEELNVESPPAAIGSSSASRSEAFRPQVVNGL</sequence>
<gene>
    <name type="ORF">ORF3a</name>
</gene>
<accession>Q66137</accession>
<dbReference type="EMBL" id="D28486">
    <property type="protein sequence ID" value="BAA05844.1"/>
    <property type="molecule type" value="Genomic_RNA"/>
</dbReference>
<dbReference type="GO" id="GO:0044219">
    <property type="term" value="C:host cell plasmodesma"/>
    <property type="evidence" value="ECO:0007669"/>
    <property type="project" value="UniProtKB-SubCell"/>
</dbReference>
<dbReference type="GO" id="GO:0046740">
    <property type="term" value="P:transport of virus in host, cell to cell"/>
    <property type="evidence" value="ECO:0007669"/>
    <property type="project" value="UniProtKB-KW"/>
</dbReference>
<dbReference type="InterPro" id="IPR000603">
    <property type="entry name" value="MPV"/>
</dbReference>
<dbReference type="Pfam" id="PF00803">
    <property type="entry name" value="3A"/>
    <property type="match status" value="1"/>
</dbReference>